<name>CYMEM_MELDN</name>
<protein>
    <recommendedName>
        <fullName evidence="3">Cyclotide mden-M</fullName>
    </recommendedName>
</protein>
<keyword id="KW-0903">Direct protein sequencing</keyword>
<keyword id="KW-1015">Disulfide bond</keyword>
<keyword id="KW-0611">Plant defense</keyword>
<proteinExistence type="evidence at protein level"/>
<comment type="function">
    <text evidence="1">Probably participates in a plant defense mechanism.</text>
</comment>
<comment type="domain">
    <text evidence="4">The presence of a 'disulfide through disulfide knot' structurally defines this protein as a knottin.</text>
</comment>
<comment type="PTM">
    <text evidence="1">This is a cyclic peptide.</text>
</comment>
<comment type="similarity">
    <text evidence="1">Belongs to the cyclotide family. Bracelet subfamily.</text>
</comment>
<comment type="caution">
    <text evidence="1">This peptide is cyclic. The start position was chosen by similarity to Oak1 (kalata B1) for which the DNA sequence is known.</text>
</comment>
<organism evidence="3">
    <name type="scientific">Melicytus dentatus</name>
    <name type="common">Tree violet</name>
    <dbReference type="NCBI Taxonomy" id="491106"/>
    <lineage>
        <taxon>Eukaryota</taxon>
        <taxon>Viridiplantae</taxon>
        <taxon>Streptophyta</taxon>
        <taxon>Embryophyta</taxon>
        <taxon>Tracheophyta</taxon>
        <taxon>Spermatophyta</taxon>
        <taxon>Magnoliopsida</taxon>
        <taxon>eudicotyledons</taxon>
        <taxon>Gunneridae</taxon>
        <taxon>Pentapetalae</taxon>
        <taxon>rosids</taxon>
        <taxon>fabids</taxon>
        <taxon>Malpighiales</taxon>
        <taxon>Violaceae</taxon>
        <taxon>Melicytus</taxon>
    </lineage>
</organism>
<accession>C0HKJ5</accession>
<reference evidence="4" key="1">
    <citation type="journal article" date="2017" name="J. Nat. Prod.">
        <title>Understanding the Diversity and Distribution of Cyclotides from Plants of Varied Genetic Origin.</title>
        <authorList>
            <person name="Ravipati A.S."/>
            <person name="Poth A.G."/>
            <person name="Troeira Henriques S."/>
            <person name="Bhandari M."/>
            <person name="Huang Y.H."/>
            <person name="Nino J."/>
            <person name="Colgrave M.L."/>
            <person name="Craik D.J."/>
        </authorList>
    </citation>
    <scope>PROTEIN SEQUENCE</scope>
</reference>
<evidence type="ECO:0000255" key="1">
    <source>
        <dbReference type="PROSITE-ProRule" id="PRU00395"/>
    </source>
</evidence>
<evidence type="ECO:0000269" key="2">
    <source>
    </source>
</evidence>
<evidence type="ECO:0000303" key="3">
    <source>
    </source>
</evidence>
<evidence type="ECO:0000305" key="4"/>
<sequence length="31" mass="3270">GTIPCGESCVYIPCITSALGCSCKKKVCYKN</sequence>
<feature type="peptide" id="PRO_0000441368" description="Cyclotide mden-M" evidence="2">
    <location>
        <begin position="1"/>
        <end position="31"/>
    </location>
</feature>
<feature type="disulfide bond" evidence="1">
    <location>
        <begin position="5"/>
        <end position="21"/>
    </location>
</feature>
<feature type="disulfide bond" evidence="1">
    <location>
        <begin position="9"/>
        <end position="23"/>
    </location>
</feature>
<feature type="disulfide bond" evidence="1">
    <location>
        <begin position="14"/>
        <end position="28"/>
    </location>
</feature>
<feature type="cross-link" description="Cyclopeptide (Gly-Asn)" evidence="3">
    <location>
        <begin position="1"/>
        <end position="31"/>
    </location>
</feature>
<dbReference type="SMR" id="C0HKJ5"/>
<dbReference type="GO" id="GO:0006952">
    <property type="term" value="P:defense response"/>
    <property type="evidence" value="ECO:0007669"/>
    <property type="project" value="UniProtKB-KW"/>
</dbReference>
<dbReference type="InterPro" id="IPR005535">
    <property type="entry name" value="Cyclotide"/>
</dbReference>
<dbReference type="InterPro" id="IPR012323">
    <property type="entry name" value="Cyclotide_bracelet_CS"/>
</dbReference>
<dbReference type="InterPro" id="IPR036146">
    <property type="entry name" value="Cyclotide_sf"/>
</dbReference>
<dbReference type="Pfam" id="PF03784">
    <property type="entry name" value="Cyclotide"/>
    <property type="match status" value="1"/>
</dbReference>
<dbReference type="PIRSF" id="PIRSF037891">
    <property type="entry name" value="Cycloviolacin"/>
    <property type="match status" value="1"/>
</dbReference>
<dbReference type="SUPFAM" id="SSF57038">
    <property type="entry name" value="Cyclotides"/>
    <property type="match status" value="1"/>
</dbReference>
<dbReference type="PROSITE" id="PS51052">
    <property type="entry name" value="CYCLOTIDE"/>
    <property type="match status" value="1"/>
</dbReference>
<dbReference type="PROSITE" id="PS60008">
    <property type="entry name" value="CYCLOTIDE_BRACELET"/>
    <property type="match status" value="1"/>
</dbReference>